<name>PSBF_TOBAC</name>
<reference key="1">
    <citation type="journal article" date="1986" name="Curr. Genet.">
        <title>Cytochrome b-559 genes from Oenothera hookeri and Nicotiana tabacum show a remarkably high degree of conservation as compared to spinach. The enigma of cytochrome b-559: highly conserved genes and proteins but no known function.</title>
        <authorList>
            <person name="Carrillo N."/>
            <person name="Seyer P."/>
            <person name="Tyagi A."/>
            <person name="Herrmann R.G."/>
        </authorList>
    </citation>
    <scope>NUCLEOTIDE SEQUENCE [GENOMIC DNA]</scope>
</reference>
<reference key="2">
    <citation type="journal article" date="1986" name="EMBO J.">
        <title>The complete nucleotide sequence of the tobacco chloroplast genome: its gene organization and expression.</title>
        <authorList>
            <person name="Shinozaki K."/>
            <person name="Ohme M."/>
            <person name="Tanaka M."/>
            <person name="Wakasugi T."/>
            <person name="Hayashida N."/>
            <person name="Matsubayashi T."/>
            <person name="Zaita N."/>
            <person name="Chunwongse J."/>
            <person name="Obokata J."/>
            <person name="Yamaguchi-Shinozaki K."/>
            <person name="Ohto C."/>
            <person name="Torazawa K."/>
            <person name="Meng B.-Y."/>
            <person name="Sugita M."/>
            <person name="Deno H."/>
            <person name="Kamogashira T."/>
            <person name="Yamada K."/>
            <person name="Kusuda J."/>
            <person name="Takaiwa F."/>
            <person name="Kato A."/>
            <person name="Tohdoh N."/>
            <person name="Shimada H."/>
            <person name="Sugiura M."/>
        </authorList>
    </citation>
    <scope>NUCLEOTIDE SEQUENCE [LARGE SCALE GENOMIC DNA]</scope>
    <source>
        <strain>cv. Bright Yellow 4</strain>
    </source>
</reference>
<reference key="3">
    <citation type="journal article" date="2003" name="Mol. Genet. Genomics">
        <title>Effects of selective inactivation of individual genes for low-molecular-mass subunits on the assembly of photosystem II, as revealed by chloroplast transformation: the psbEFLJoperon in Nicotiana tabacum.</title>
        <authorList>
            <person name="Swiatek M."/>
            <person name="Regel R.E."/>
            <person name="Meurer J."/>
            <person name="Wanner G."/>
            <person name="Pakrasi H.B."/>
            <person name="Ohad I."/>
            <person name="Herrmann R.G."/>
        </authorList>
    </citation>
    <scope>FUNCTION</scope>
    <scope>DISRUPTION PHENOTYPE</scope>
    <source>
        <strain>cv. Petit Havana</strain>
    </source>
</reference>
<evidence type="ECO:0000250" key="1"/>
<evidence type="ECO:0000255" key="2">
    <source>
        <dbReference type="HAMAP-Rule" id="MF_00643"/>
    </source>
</evidence>
<evidence type="ECO:0000269" key="3">
    <source>
    </source>
</evidence>
<evidence type="ECO:0000305" key="4"/>
<sequence length="39" mass="4498">MTIDRTYPIFTVRWLAIHGLAVPTVFFLGSISAMQFIQR</sequence>
<keyword id="KW-0150">Chloroplast</keyword>
<keyword id="KW-0249">Electron transport</keyword>
<keyword id="KW-0349">Heme</keyword>
<keyword id="KW-0408">Iron</keyword>
<keyword id="KW-0472">Membrane</keyword>
<keyword id="KW-0479">Metal-binding</keyword>
<keyword id="KW-0602">Photosynthesis</keyword>
<keyword id="KW-0604">Photosystem II</keyword>
<keyword id="KW-0934">Plastid</keyword>
<keyword id="KW-1185">Reference proteome</keyword>
<keyword id="KW-0793">Thylakoid</keyword>
<keyword id="KW-0812">Transmembrane</keyword>
<keyword id="KW-1133">Transmembrane helix</keyword>
<keyword id="KW-0813">Transport</keyword>
<protein>
    <recommendedName>
        <fullName evidence="2">Cytochrome b559 subunit beta</fullName>
    </recommendedName>
    <alternativeName>
        <fullName evidence="2">PSII reaction center subunit VI</fullName>
    </alternativeName>
</protein>
<proteinExistence type="inferred from homology"/>
<dbReference type="EMBL" id="X03781">
    <property type="protein sequence ID" value="CAA27413.1"/>
    <property type="molecule type" value="Genomic_DNA"/>
</dbReference>
<dbReference type="EMBL" id="Z00044">
    <property type="protein sequence ID" value="CAA77367.1"/>
    <property type="molecule type" value="Genomic_DNA"/>
</dbReference>
<dbReference type="RefSeq" id="NP_054516.1">
    <property type="nucleotide sequence ID" value="NC_001879.2"/>
</dbReference>
<dbReference type="SMR" id="P60124"/>
<dbReference type="GeneID" id="800446"/>
<dbReference type="KEGG" id="nta:800446"/>
<dbReference type="OrthoDB" id="77at2759"/>
<dbReference type="Proteomes" id="UP000084051">
    <property type="component" value="Unplaced"/>
</dbReference>
<dbReference type="GO" id="GO:0009535">
    <property type="term" value="C:chloroplast thylakoid membrane"/>
    <property type="evidence" value="ECO:0007669"/>
    <property type="project" value="UniProtKB-SubCell"/>
</dbReference>
<dbReference type="GO" id="GO:0009539">
    <property type="term" value="C:photosystem II reaction center"/>
    <property type="evidence" value="ECO:0007669"/>
    <property type="project" value="InterPro"/>
</dbReference>
<dbReference type="GO" id="GO:0009055">
    <property type="term" value="F:electron transfer activity"/>
    <property type="evidence" value="ECO:0007669"/>
    <property type="project" value="UniProtKB-UniRule"/>
</dbReference>
<dbReference type="GO" id="GO:0020037">
    <property type="term" value="F:heme binding"/>
    <property type="evidence" value="ECO:0007669"/>
    <property type="project" value="InterPro"/>
</dbReference>
<dbReference type="GO" id="GO:0005506">
    <property type="term" value="F:iron ion binding"/>
    <property type="evidence" value="ECO:0007669"/>
    <property type="project" value="UniProtKB-UniRule"/>
</dbReference>
<dbReference type="GO" id="GO:0009767">
    <property type="term" value="P:photosynthetic electron transport chain"/>
    <property type="evidence" value="ECO:0007669"/>
    <property type="project" value="InterPro"/>
</dbReference>
<dbReference type="HAMAP" id="MF_00643">
    <property type="entry name" value="PSII_PsbF"/>
    <property type="match status" value="1"/>
</dbReference>
<dbReference type="InterPro" id="IPR006241">
    <property type="entry name" value="PSII_cyt_b559_bsu"/>
</dbReference>
<dbReference type="InterPro" id="IPR006216">
    <property type="entry name" value="PSII_cyt_b559_CS"/>
</dbReference>
<dbReference type="InterPro" id="IPR013081">
    <property type="entry name" value="PSII_cyt_b559_N"/>
</dbReference>
<dbReference type="NCBIfam" id="TIGR01333">
    <property type="entry name" value="cyt_b559_beta"/>
    <property type="match status" value="1"/>
</dbReference>
<dbReference type="Pfam" id="PF00283">
    <property type="entry name" value="Cytochrom_B559"/>
    <property type="match status" value="1"/>
</dbReference>
<dbReference type="PIRSF" id="PIRSF000037">
    <property type="entry name" value="PsbF"/>
    <property type="match status" value="1"/>
</dbReference>
<dbReference type="SUPFAM" id="SSF161045">
    <property type="entry name" value="Cytochrome b559 subunits"/>
    <property type="match status" value="1"/>
</dbReference>
<dbReference type="PROSITE" id="PS00537">
    <property type="entry name" value="CYTOCHROME_B559"/>
    <property type="match status" value="1"/>
</dbReference>
<gene>
    <name evidence="2" type="primary">psbF</name>
</gene>
<comment type="function">
    <text evidence="2 3">This b-type cytochrome is tightly associated with the reaction center of photosystem II (PSII), and is essential for PSII function (PubMed:12655396). PSII is a light-driven water:plastoquinone oxidoreductase that uses light energy to abstract electrons from H(2)O, generating O(2) and a proton gradient subsequently used for ATP formation. It consists of a core antenna complex that captures photons, and an electron transfer chain that converts photonic excitation into a charge separation.</text>
</comment>
<comment type="cofactor">
    <cofactor evidence="2">
        <name>heme b</name>
        <dbReference type="ChEBI" id="CHEBI:60344"/>
    </cofactor>
    <text evidence="2">With its partner (PsbE) binds heme. PSII binds additional chlorophylls, carotenoids and specific lipids.</text>
</comment>
<comment type="subunit">
    <text evidence="2">Heterodimer of an alpha subunit and a beta subunit. PSII is composed of 1 copy each of membrane proteins PsbA, PsbB, PsbC, PsbD, PsbE, PsbF, PsbH, PsbI, PsbJ, PsbK, PsbL, PsbM, PsbT, PsbX, PsbY, PsbZ, Psb30/Ycf12, at least 3 peripheral proteins of the oxygen-evolving complex and a large number of cofactors. It forms dimeric complexes.</text>
</comment>
<comment type="subcellular location">
    <subcellularLocation>
        <location evidence="2">Plastid</location>
        <location evidence="2">Chloroplast thylakoid membrane</location>
        <topology evidence="2">Single-pass membrane protein</topology>
    </subcellularLocation>
</comment>
<comment type="disruption phenotype">
    <text evidence="3">Plants unable to grow photoautotrophically, no detectable PSII activity although under low light (10 umol photons/m(2)/s) on a carbon source plants are green.</text>
</comment>
<comment type="similarity">
    <text evidence="2">Belongs to the PsbE/PsbF family.</text>
</comment>
<feature type="initiator methionine" description="Removed" evidence="1">
    <location>
        <position position="1"/>
    </location>
</feature>
<feature type="chain" id="PRO_0000200460" description="Cytochrome b559 subunit beta">
    <location>
        <begin position="2"/>
        <end position="39"/>
    </location>
</feature>
<feature type="transmembrane region" description="Helical" evidence="2">
    <location>
        <begin position="14"/>
        <end position="30"/>
    </location>
</feature>
<feature type="binding site" description="axial binding residue" evidence="2">
    <location>
        <position position="18"/>
    </location>
    <ligand>
        <name>heme</name>
        <dbReference type="ChEBI" id="CHEBI:30413"/>
        <note>ligand shared with alpha subunit</note>
    </ligand>
    <ligandPart>
        <name>Fe</name>
        <dbReference type="ChEBI" id="CHEBI:18248"/>
    </ligandPart>
</feature>
<feature type="sequence conflict" description="In Ref. 2; CAA77367." evidence="4" ref="2">
    <original>I</original>
    <variation>V</variation>
    <location>
        <position position="17"/>
    </location>
</feature>
<organism>
    <name type="scientific">Nicotiana tabacum</name>
    <name type="common">Common tobacco</name>
    <dbReference type="NCBI Taxonomy" id="4097"/>
    <lineage>
        <taxon>Eukaryota</taxon>
        <taxon>Viridiplantae</taxon>
        <taxon>Streptophyta</taxon>
        <taxon>Embryophyta</taxon>
        <taxon>Tracheophyta</taxon>
        <taxon>Spermatophyta</taxon>
        <taxon>Magnoliopsida</taxon>
        <taxon>eudicotyledons</taxon>
        <taxon>Gunneridae</taxon>
        <taxon>Pentapetalae</taxon>
        <taxon>asterids</taxon>
        <taxon>lamiids</taxon>
        <taxon>Solanales</taxon>
        <taxon>Solanaceae</taxon>
        <taxon>Nicotianoideae</taxon>
        <taxon>Nicotianeae</taxon>
        <taxon>Nicotiana</taxon>
    </lineage>
</organism>
<accession>P60124</accession>
<accession>P05171</accession>
<accession>P09198</accession>
<accession>Q95H58</accession>
<accession>Q9M3L1</accession>
<geneLocation type="chloroplast"/>